<protein>
    <recommendedName>
        <fullName evidence="1">NAD(P)H-quinone oxidoreductase chain 4, chloroplastic</fullName>
        <ecNumber evidence="1">7.1.1.-</ecNumber>
    </recommendedName>
    <alternativeName>
        <fullName evidence="1">NAD(P)H dehydrogenase, chain 4</fullName>
    </alternativeName>
    <alternativeName>
        <fullName evidence="1">NADH-plastoquinone oxidoreductase chain 4</fullName>
    </alternativeName>
</protein>
<proteinExistence type="inferred from homology"/>
<accession>A1EA59</accession>
<dbReference type="EC" id="7.1.1.-" evidence="1"/>
<dbReference type="EMBL" id="EF115543">
    <property type="protein sequence ID" value="ABK79631.1"/>
    <property type="molecule type" value="Genomic_DNA"/>
</dbReference>
<dbReference type="RefSeq" id="YP_874787.1">
    <property type="nucleotide sequence ID" value="NC_008591.1"/>
</dbReference>
<dbReference type="SMR" id="A1EA59"/>
<dbReference type="GeneID" id="4525036"/>
<dbReference type="GO" id="GO:0009535">
    <property type="term" value="C:chloroplast thylakoid membrane"/>
    <property type="evidence" value="ECO:0007669"/>
    <property type="project" value="UniProtKB-SubCell"/>
</dbReference>
<dbReference type="GO" id="GO:0008137">
    <property type="term" value="F:NADH dehydrogenase (ubiquinone) activity"/>
    <property type="evidence" value="ECO:0007669"/>
    <property type="project" value="InterPro"/>
</dbReference>
<dbReference type="GO" id="GO:0048039">
    <property type="term" value="F:ubiquinone binding"/>
    <property type="evidence" value="ECO:0007669"/>
    <property type="project" value="TreeGrafter"/>
</dbReference>
<dbReference type="GO" id="GO:0042773">
    <property type="term" value="P:ATP synthesis coupled electron transport"/>
    <property type="evidence" value="ECO:0007669"/>
    <property type="project" value="InterPro"/>
</dbReference>
<dbReference type="GO" id="GO:0015990">
    <property type="term" value="P:electron transport coupled proton transport"/>
    <property type="evidence" value="ECO:0007669"/>
    <property type="project" value="TreeGrafter"/>
</dbReference>
<dbReference type="HAMAP" id="MF_00491">
    <property type="entry name" value="NDH1_NuoM"/>
    <property type="match status" value="1"/>
</dbReference>
<dbReference type="InterPro" id="IPR022997">
    <property type="entry name" value="NADH_Q_OxRdtase_chain4"/>
</dbReference>
<dbReference type="InterPro" id="IPR010227">
    <property type="entry name" value="NADH_Q_OxRdtase_chainM/4"/>
</dbReference>
<dbReference type="InterPro" id="IPR003918">
    <property type="entry name" value="NADH_UbQ_OxRdtase"/>
</dbReference>
<dbReference type="InterPro" id="IPR001750">
    <property type="entry name" value="ND/Mrp_TM"/>
</dbReference>
<dbReference type="NCBIfam" id="TIGR01972">
    <property type="entry name" value="NDH_I_M"/>
    <property type="match status" value="1"/>
</dbReference>
<dbReference type="PANTHER" id="PTHR43507:SF21">
    <property type="entry name" value="NAD(P)H-QUINONE OXIDOREDUCTASE CHAIN 4, CHLOROPLASTIC"/>
    <property type="match status" value="1"/>
</dbReference>
<dbReference type="PANTHER" id="PTHR43507">
    <property type="entry name" value="NADH-UBIQUINONE OXIDOREDUCTASE CHAIN 4"/>
    <property type="match status" value="1"/>
</dbReference>
<dbReference type="Pfam" id="PF00361">
    <property type="entry name" value="Proton_antipo_M"/>
    <property type="match status" value="1"/>
</dbReference>
<dbReference type="PRINTS" id="PR01437">
    <property type="entry name" value="NUOXDRDTASE4"/>
</dbReference>
<reference key="1">
    <citation type="journal article" date="2007" name="Theor. Appl. Genet.">
        <title>Complete chloroplast genome sequences of Hordeum vulgare, Sorghum bicolor and Agrostis stolonifera, and comparative analyses with other grass genomes.</title>
        <authorList>
            <person name="Saski C."/>
            <person name="Lee S.-B."/>
            <person name="Fjellheim S."/>
            <person name="Guda C."/>
            <person name="Jansen R.K."/>
            <person name="Luo H."/>
            <person name="Tomkins J."/>
            <person name="Rognli O.A."/>
            <person name="Daniell H."/>
            <person name="Clarke J.L."/>
        </authorList>
    </citation>
    <scope>NUCLEOTIDE SEQUENCE [LARGE SCALE GENOMIC DNA]</scope>
    <source>
        <strain>cv. Penn A-4</strain>
    </source>
</reference>
<keyword id="KW-0150">Chloroplast</keyword>
<keyword id="KW-0472">Membrane</keyword>
<keyword id="KW-0520">NAD</keyword>
<keyword id="KW-0521">NADP</keyword>
<keyword id="KW-0934">Plastid</keyword>
<keyword id="KW-0618">Plastoquinone</keyword>
<keyword id="KW-0874">Quinone</keyword>
<keyword id="KW-0793">Thylakoid</keyword>
<keyword id="KW-1278">Translocase</keyword>
<keyword id="KW-0812">Transmembrane</keyword>
<keyword id="KW-1133">Transmembrane helix</keyword>
<name>NU4C_AGRST</name>
<gene>
    <name evidence="1" type="primary">ndhD</name>
</gene>
<evidence type="ECO:0000255" key="1">
    <source>
        <dbReference type="HAMAP-Rule" id="MF_00491"/>
    </source>
</evidence>
<geneLocation type="chloroplast"/>
<sequence>MSYFPWLTILVVLPIFAGSLIFFLPHRGNKIVRWYTISICLLEFLLMTYAFCYHFQLEDPLIQLKEDYKWIDILDFHWRLGIDGLSVGSILLTGFITTLATLAAWPVTRNSRLFYFLMLAMYSGQIGLFSSRDLLLFFIMWELELIPVYLLLSMWGGKRRLYSATKFILYTAGGSIFFLIGVLGMGLYGSNEPGLDLERLINQSYPTTLEILLYFGFLIAYAVKLPIIPLHTWLPDTHGEAHYSTCMLLAGILLKMGAYGLIRINMELLPHAHYLFSPWLVIIGAIQIIYAASTSLGQRNFKKRIAYSSVSHMGFIIIGIGSITNIGLNGAILQILSHGFIGATLFFLAGTASDRMRLVYLEELGGISIPMPKIFTMFSSFSMASLALPGMSGFVAELVVFFGLITSPKFLLMPKMLITFVMAIGMILTPIYLLSMLRQMFYGYKLFNVPNANFVDSGPRELFILICIFLPVIGIGIYPDLVLSLSVDRVEALLSNYYPK</sequence>
<comment type="catalytic activity">
    <reaction evidence="1">
        <text>a plastoquinone + NADH + (n+1) H(+)(in) = a plastoquinol + NAD(+) + n H(+)(out)</text>
        <dbReference type="Rhea" id="RHEA:42608"/>
        <dbReference type="Rhea" id="RHEA-COMP:9561"/>
        <dbReference type="Rhea" id="RHEA-COMP:9562"/>
        <dbReference type="ChEBI" id="CHEBI:15378"/>
        <dbReference type="ChEBI" id="CHEBI:17757"/>
        <dbReference type="ChEBI" id="CHEBI:57540"/>
        <dbReference type="ChEBI" id="CHEBI:57945"/>
        <dbReference type="ChEBI" id="CHEBI:62192"/>
    </reaction>
</comment>
<comment type="catalytic activity">
    <reaction evidence="1">
        <text>a plastoquinone + NADPH + (n+1) H(+)(in) = a plastoquinol + NADP(+) + n H(+)(out)</text>
        <dbReference type="Rhea" id="RHEA:42612"/>
        <dbReference type="Rhea" id="RHEA-COMP:9561"/>
        <dbReference type="Rhea" id="RHEA-COMP:9562"/>
        <dbReference type="ChEBI" id="CHEBI:15378"/>
        <dbReference type="ChEBI" id="CHEBI:17757"/>
        <dbReference type="ChEBI" id="CHEBI:57783"/>
        <dbReference type="ChEBI" id="CHEBI:58349"/>
        <dbReference type="ChEBI" id="CHEBI:62192"/>
    </reaction>
</comment>
<comment type="subcellular location">
    <subcellularLocation>
        <location evidence="1">Plastid</location>
        <location evidence="1">Chloroplast thylakoid membrane</location>
        <topology evidence="1">Multi-pass membrane protein</topology>
    </subcellularLocation>
</comment>
<comment type="similarity">
    <text evidence="1">Belongs to the complex I subunit 4 family.</text>
</comment>
<organism>
    <name type="scientific">Agrostis stolonifera</name>
    <name type="common">Creeping bentgrass</name>
    <dbReference type="NCBI Taxonomy" id="63632"/>
    <lineage>
        <taxon>Eukaryota</taxon>
        <taxon>Viridiplantae</taxon>
        <taxon>Streptophyta</taxon>
        <taxon>Embryophyta</taxon>
        <taxon>Tracheophyta</taxon>
        <taxon>Spermatophyta</taxon>
        <taxon>Magnoliopsida</taxon>
        <taxon>Liliopsida</taxon>
        <taxon>Poales</taxon>
        <taxon>Poaceae</taxon>
        <taxon>BOP clade</taxon>
        <taxon>Pooideae</taxon>
        <taxon>Poodae</taxon>
        <taxon>Poeae</taxon>
        <taxon>Poeae Chloroplast Group 1 (Aveneae type)</taxon>
        <taxon>Agrostidodinae</taxon>
        <taxon>Agrostidinae</taxon>
        <taxon>Agrostis</taxon>
    </lineage>
</organism>
<feature type="chain" id="PRO_0000275901" description="NAD(P)H-quinone oxidoreductase chain 4, chloroplastic">
    <location>
        <begin position="1"/>
        <end position="500"/>
    </location>
</feature>
<feature type="transmembrane region" description="Helical" evidence="1">
    <location>
        <begin position="4"/>
        <end position="24"/>
    </location>
</feature>
<feature type="transmembrane region" description="Helical" evidence="1">
    <location>
        <begin position="37"/>
        <end position="57"/>
    </location>
</feature>
<feature type="transmembrane region" description="Helical" evidence="1">
    <location>
        <begin position="87"/>
        <end position="107"/>
    </location>
</feature>
<feature type="transmembrane region" description="Helical" evidence="1">
    <location>
        <begin position="113"/>
        <end position="130"/>
    </location>
</feature>
<feature type="transmembrane region" description="Helical" evidence="1">
    <location>
        <begin position="134"/>
        <end position="154"/>
    </location>
</feature>
<feature type="transmembrane region" description="Helical" evidence="1">
    <location>
        <begin position="167"/>
        <end position="187"/>
    </location>
</feature>
<feature type="transmembrane region" description="Helical" evidence="1">
    <location>
        <begin position="211"/>
        <end position="231"/>
    </location>
</feature>
<feature type="transmembrane region" description="Helical" evidence="1">
    <location>
        <begin position="242"/>
        <end position="262"/>
    </location>
</feature>
<feature type="transmembrane region" description="Helical" evidence="1">
    <location>
        <begin position="272"/>
        <end position="292"/>
    </location>
</feature>
<feature type="transmembrane region" description="Helical" evidence="1">
    <location>
        <begin position="313"/>
        <end position="333"/>
    </location>
</feature>
<feature type="transmembrane region" description="Helical" evidence="1">
    <location>
        <begin position="334"/>
        <end position="354"/>
    </location>
</feature>
<feature type="transmembrane region" description="Helical" evidence="1">
    <location>
        <begin position="386"/>
        <end position="406"/>
    </location>
</feature>
<feature type="transmembrane region" description="Helical" evidence="1">
    <location>
        <begin position="417"/>
        <end position="437"/>
    </location>
</feature>
<feature type="transmembrane region" description="Helical" evidence="1">
    <location>
        <begin position="462"/>
        <end position="482"/>
    </location>
</feature>